<dbReference type="EC" id="6.1.1.5" evidence="1"/>
<dbReference type="EMBL" id="AP006841">
    <property type="protein sequence ID" value="BAD49022.1"/>
    <property type="molecule type" value="Genomic_DNA"/>
</dbReference>
<dbReference type="RefSeq" id="WP_011202809.1">
    <property type="nucleotide sequence ID" value="NC_006347.1"/>
</dbReference>
<dbReference type="RefSeq" id="YP_099556.1">
    <property type="nucleotide sequence ID" value="NC_006347.1"/>
</dbReference>
<dbReference type="SMR" id="Q64U07"/>
<dbReference type="STRING" id="295405.BF2275"/>
<dbReference type="KEGG" id="bfr:BF2275"/>
<dbReference type="PATRIC" id="fig|295405.11.peg.2207"/>
<dbReference type="HOGENOM" id="CLU_001493_1_1_10"/>
<dbReference type="OrthoDB" id="9810365at2"/>
<dbReference type="Proteomes" id="UP000002197">
    <property type="component" value="Chromosome"/>
</dbReference>
<dbReference type="GO" id="GO:0005737">
    <property type="term" value="C:cytoplasm"/>
    <property type="evidence" value="ECO:0007669"/>
    <property type="project" value="UniProtKB-SubCell"/>
</dbReference>
<dbReference type="GO" id="GO:0002161">
    <property type="term" value="F:aminoacyl-tRNA deacylase activity"/>
    <property type="evidence" value="ECO:0007669"/>
    <property type="project" value="InterPro"/>
</dbReference>
<dbReference type="GO" id="GO:0005524">
    <property type="term" value="F:ATP binding"/>
    <property type="evidence" value="ECO:0007669"/>
    <property type="project" value="UniProtKB-UniRule"/>
</dbReference>
<dbReference type="GO" id="GO:0004822">
    <property type="term" value="F:isoleucine-tRNA ligase activity"/>
    <property type="evidence" value="ECO:0007669"/>
    <property type="project" value="UniProtKB-UniRule"/>
</dbReference>
<dbReference type="GO" id="GO:0000049">
    <property type="term" value="F:tRNA binding"/>
    <property type="evidence" value="ECO:0007669"/>
    <property type="project" value="InterPro"/>
</dbReference>
<dbReference type="GO" id="GO:0008270">
    <property type="term" value="F:zinc ion binding"/>
    <property type="evidence" value="ECO:0007669"/>
    <property type="project" value="UniProtKB-UniRule"/>
</dbReference>
<dbReference type="GO" id="GO:0006428">
    <property type="term" value="P:isoleucyl-tRNA aminoacylation"/>
    <property type="evidence" value="ECO:0007669"/>
    <property type="project" value="UniProtKB-UniRule"/>
</dbReference>
<dbReference type="CDD" id="cd07961">
    <property type="entry name" value="Anticodon_Ia_Ile_ABEc"/>
    <property type="match status" value="1"/>
</dbReference>
<dbReference type="CDD" id="cd00818">
    <property type="entry name" value="IleRS_core"/>
    <property type="match status" value="1"/>
</dbReference>
<dbReference type="FunFam" id="1.10.730.10:FF:000036">
    <property type="entry name" value="Isoleucine--tRNA ligase"/>
    <property type="match status" value="1"/>
</dbReference>
<dbReference type="FunFam" id="3.40.50.620:FF:000175">
    <property type="entry name" value="Isoleucine--tRNA ligase"/>
    <property type="match status" value="1"/>
</dbReference>
<dbReference type="FunFam" id="3.40.50.620:FF:000205">
    <property type="entry name" value="Isoleucine--tRNA ligase"/>
    <property type="match status" value="1"/>
</dbReference>
<dbReference type="Gene3D" id="3.30.720.200">
    <property type="match status" value="1"/>
</dbReference>
<dbReference type="Gene3D" id="3.40.50.620">
    <property type="entry name" value="HUPs"/>
    <property type="match status" value="2"/>
</dbReference>
<dbReference type="Gene3D" id="1.10.730.10">
    <property type="entry name" value="Isoleucyl-tRNA Synthetase, Domain 1"/>
    <property type="match status" value="1"/>
</dbReference>
<dbReference type="HAMAP" id="MF_02003">
    <property type="entry name" value="Ile_tRNA_synth_type2"/>
    <property type="match status" value="1"/>
</dbReference>
<dbReference type="InterPro" id="IPR002300">
    <property type="entry name" value="aa-tRNA-synth_Ia"/>
</dbReference>
<dbReference type="InterPro" id="IPR033709">
    <property type="entry name" value="Anticodon_Ile_ABEc"/>
</dbReference>
<dbReference type="InterPro" id="IPR002301">
    <property type="entry name" value="Ile-tRNA-ligase"/>
</dbReference>
<dbReference type="InterPro" id="IPR023586">
    <property type="entry name" value="Ile-tRNA-ligase_type2"/>
</dbReference>
<dbReference type="InterPro" id="IPR013155">
    <property type="entry name" value="M/V/L/I-tRNA-synth_anticd-bd"/>
</dbReference>
<dbReference type="InterPro" id="IPR014729">
    <property type="entry name" value="Rossmann-like_a/b/a_fold"/>
</dbReference>
<dbReference type="InterPro" id="IPR009080">
    <property type="entry name" value="tRNAsynth_Ia_anticodon-bd"/>
</dbReference>
<dbReference type="InterPro" id="IPR009008">
    <property type="entry name" value="Val/Leu/Ile-tRNA-synth_edit"/>
</dbReference>
<dbReference type="NCBIfam" id="TIGR00392">
    <property type="entry name" value="ileS"/>
    <property type="match status" value="1"/>
</dbReference>
<dbReference type="PANTHER" id="PTHR42780:SF1">
    <property type="entry name" value="ISOLEUCINE--TRNA LIGASE, CYTOPLASMIC"/>
    <property type="match status" value="1"/>
</dbReference>
<dbReference type="PANTHER" id="PTHR42780">
    <property type="entry name" value="SOLEUCYL-TRNA SYNTHETASE"/>
    <property type="match status" value="1"/>
</dbReference>
<dbReference type="Pfam" id="PF08264">
    <property type="entry name" value="Anticodon_1"/>
    <property type="match status" value="1"/>
</dbReference>
<dbReference type="Pfam" id="PF19302">
    <property type="entry name" value="DUF5915"/>
    <property type="match status" value="1"/>
</dbReference>
<dbReference type="Pfam" id="PF00133">
    <property type="entry name" value="tRNA-synt_1"/>
    <property type="match status" value="1"/>
</dbReference>
<dbReference type="PRINTS" id="PR00984">
    <property type="entry name" value="TRNASYNTHILE"/>
</dbReference>
<dbReference type="SUPFAM" id="SSF47323">
    <property type="entry name" value="Anticodon-binding domain of a subclass of class I aminoacyl-tRNA synthetases"/>
    <property type="match status" value="1"/>
</dbReference>
<dbReference type="SUPFAM" id="SSF52374">
    <property type="entry name" value="Nucleotidylyl transferase"/>
    <property type="match status" value="1"/>
</dbReference>
<dbReference type="SUPFAM" id="SSF50677">
    <property type="entry name" value="ValRS/IleRS/LeuRS editing domain"/>
    <property type="match status" value="1"/>
</dbReference>
<organism>
    <name type="scientific">Bacteroides fragilis (strain YCH46)</name>
    <dbReference type="NCBI Taxonomy" id="295405"/>
    <lineage>
        <taxon>Bacteria</taxon>
        <taxon>Pseudomonadati</taxon>
        <taxon>Bacteroidota</taxon>
        <taxon>Bacteroidia</taxon>
        <taxon>Bacteroidales</taxon>
        <taxon>Bacteroidaceae</taxon>
        <taxon>Bacteroides</taxon>
    </lineage>
</organism>
<reference key="1">
    <citation type="journal article" date="2004" name="Proc. Natl. Acad. Sci. U.S.A.">
        <title>Genomic analysis of Bacteroides fragilis reveals extensive DNA inversions regulating cell surface adaptation.</title>
        <authorList>
            <person name="Kuwahara T."/>
            <person name="Yamashita A."/>
            <person name="Hirakawa H."/>
            <person name="Nakayama H."/>
            <person name="Toh H."/>
            <person name="Okada N."/>
            <person name="Kuhara S."/>
            <person name="Hattori M."/>
            <person name="Hayashi T."/>
            <person name="Ohnishi Y."/>
        </authorList>
    </citation>
    <scope>NUCLEOTIDE SEQUENCE [LARGE SCALE GENOMIC DNA]</scope>
    <source>
        <strain>YCH46</strain>
    </source>
</reference>
<evidence type="ECO:0000255" key="1">
    <source>
        <dbReference type="HAMAP-Rule" id="MF_02003"/>
    </source>
</evidence>
<comment type="function">
    <text evidence="1">Catalyzes the attachment of isoleucine to tRNA(Ile). As IleRS can inadvertently accommodate and process structurally similar amino acids such as valine, to avoid such errors it has two additional distinct tRNA(Ile)-dependent editing activities. One activity is designated as 'pretransfer' editing and involves the hydrolysis of activated Val-AMP. The other activity is designated 'posttransfer' editing and involves deacylation of mischarged Val-tRNA(Ile).</text>
</comment>
<comment type="catalytic activity">
    <reaction evidence="1">
        <text>tRNA(Ile) + L-isoleucine + ATP = L-isoleucyl-tRNA(Ile) + AMP + diphosphate</text>
        <dbReference type="Rhea" id="RHEA:11060"/>
        <dbReference type="Rhea" id="RHEA-COMP:9666"/>
        <dbReference type="Rhea" id="RHEA-COMP:9695"/>
        <dbReference type="ChEBI" id="CHEBI:30616"/>
        <dbReference type="ChEBI" id="CHEBI:33019"/>
        <dbReference type="ChEBI" id="CHEBI:58045"/>
        <dbReference type="ChEBI" id="CHEBI:78442"/>
        <dbReference type="ChEBI" id="CHEBI:78528"/>
        <dbReference type="ChEBI" id="CHEBI:456215"/>
        <dbReference type="EC" id="6.1.1.5"/>
    </reaction>
</comment>
<comment type="cofactor">
    <cofactor evidence="1">
        <name>Zn(2+)</name>
        <dbReference type="ChEBI" id="CHEBI:29105"/>
    </cofactor>
</comment>
<comment type="subunit">
    <text evidence="1">Monomer.</text>
</comment>
<comment type="subcellular location">
    <subcellularLocation>
        <location evidence="1">Cytoplasm</location>
    </subcellularLocation>
</comment>
<comment type="domain">
    <text evidence="1">IleRS has two distinct active sites: one for aminoacylation and one for editing. The misactivated valine is translocated from the active site to the editing site, which sterically excludes the correctly activated isoleucine. The single editing site contains two valyl binding pockets, one specific for each substrate (Val-AMP or Val-tRNA(Ile)).</text>
</comment>
<comment type="similarity">
    <text evidence="1">Belongs to the class-I aminoacyl-tRNA synthetase family. IleS type 2 subfamily.</text>
</comment>
<proteinExistence type="inferred from homology"/>
<keyword id="KW-0030">Aminoacyl-tRNA synthetase</keyword>
<keyword id="KW-0067">ATP-binding</keyword>
<keyword id="KW-0963">Cytoplasm</keyword>
<keyword id="KW-0436">Ligase</keyword>
<keyword id="KW-0479">Metal-binding</keyword>
<keyword id="KW-0547">Nucleotide-binding</keyword>
<keyword id="KW-0648">Protein biosynthesis</keyword>
<keyword id="KW-0862">Zinc</keyword>
<protein>
    <recommendedName>
        <fullName evidence="1">Isoleucine--tRNA ligase</fullName>
        <ecNumber evidence="1">6.1.1.5</ecNumber>
    </recommendedName>
    <alternativeName>
        <fullName evidence="1">Isoleucyl-tRNA synthetase</fullName>
        <shortName evidence="1">IleRS</shortName>
    </alternativeName>
</protein>
<name>SYI_BACFR</name>
<gene>
    <name evidence="1" type="primary">ileS</name>
    <name type="ordered locus">BF2275</name>
</gene>
<feature type="chain" id="PRO_0000098520" description="Isoleucine--tRNA ligase">
    <location>
        <begin position="1"/>
        <end position="1141"/>
    </location>
</feature>
<feature type="short sequence motif" description="'HIGH' region">
    <location>
        <begin position="50"/>
        <end position="60"/>
    </location>
</feature>
<feature type="short sequence motif" description="'KMSKS' region">
    <location>
        <begin position="689"/>
        <end position="693"/>
    </location>
</feature>
<feature type="binding site" evidence="1">
    <location>
        <position position="692"/>
    </location>
    <ligand>
        <name>ATP</name>
        <dbReference type="ChEBI" id="CHEBI:30616"/>
    </ligand>
</feature>
<accession>Q64U07</accession>
<sequence length="1141" mass="130126">MSKKFAEYSQFDLSKVNKDVLKKWDENQVFAKSMTEREGCPSFVFFEGPPSANGMPGIHHVMARSIKDIFCRYKTMKGYQVKRKAGWDTHGLPVELGVEKSLGITKEDIGKTISVAEYNAHCRQDVMKFTKEWEDLTHKMGYWVDMKHPYITYDNRYIETLWWLLKQLYKKGLLYKGYTIQPYSPAAGTGLSSHELNQPGCYRDVKDTTVVAQFKMKNPKPEMAQWGTPYFLAWTTTPWTLPSNTALCVGPKIDYVAVQSYNAYTGQPITVVLAKALLNAHFNPKAAELKLEDYKAGDKLVPFKVIAEYKGPDLVGMEYEQLIPWVNPGEGAFRVILGDYVTTEDGTGIVHIAPTFGADDAQVAKAAGIPPLQLVNKKGELRPMVDLTGKFYTLDELDEDFIKQRVNIDLYKEYAGRFVKNAYDPNLSDQDESLDVSICMMMKVNNQAFKIEKHVHNYPHCWRTDKPVLYYPLDSWFIRSTACKERMIELNKTINWKPESTGTGRFGKWLENLNDWNLSRSRYWGTPLPIWRTEDNSDEKCIESVEELYNEIEKSVAAGYMQSNPYKDKGFVPGEYNEENYNKIDLHRPYVDDIILVSKDGKPMKREADLIDVWFDSGAMPYAQIHYPFENKELLDSHQVYPADFIAEGVDQTRGWFFTLHAIATMVFDSVSYKAVISNGLVLDKNGNKMSKRLGNAVDPFSTIEQYGSDPLRWYMITNSSPWDNLKFDVDGIEEVRRKFFGTLYNTYSFFALYANVDGFEYKEADLPMNERPEIDRWILSVLNTLVKEVDTCYNEYEPTKAGRLISDFVNDNLSNWYVRLNRKRFWGGGFTQDKLSAYQTLYTCLETVAKLMAPIAPFYADRLYSDLIGVTGRDNVVSVHLAKFPEYNEKMVDKELEAQMQMAQDVTSMVLALRRKVNIKVRQPLQCIMIPVVDEVQKAHIEAVKALIMSEVNVKEIKFVDGAAGVLVKKVKCDFKKLGPKFGKQMKAVAAAVAEMSQEAIAELEKNGKYTFDLGGAEAVIESADVEIFSEDIPGWLVANEGKLTVALEVTVTDELRREGIARELVNRIQNIRKSSGFEITDKIKLTLSKNPQTDDAVNEYNSYICNQVLGTSLTLADEVKDGTELNFDDFSLFVNVVKE</sequence>